<accession>Q5AI21</accession>
<accession>A0A1D8PD09</accession>
<organism>
    <name type="scientific">Candida albicans (strain SC5314 / ATCC MYA-2876)</name>
    <name type="common">Yeast</name>
    <dbReference type="NCBI Taxonomy" id="237561"/>
    <lineage>
        <taxon>Eukaryota</taxon>
        <taxon>Fungi</taxon>
        <taxon>Dikarya</taxon>
        <taxon>Ascomycota</taxon>
        <taxon>Saccharomycotina</taxon>
        <taxon>Pichiomycetes</taxon>
        <taxon>Debaryomycetaceae</taxon>
        <taxon>Candida/Lodderomyces clade</taxon>
        <taxon>Candida</taxon>
    </lineage>
</organism>
<comment type="function">
    <text evidence="1">Required for preprotein translocation.</text>
</comment>
<comment type="subunit">
    <text evidence="1">Part of a complex that contains SEC61, SEC62, SEC63, SEC66 and SEC72.</text>
</comment>
<comment type="subcellular location">
    <subcellularLocation>
        <location evidence="1">Endoplasmic reticulum membrane</location>
        <topology evidence="1">Multi-pass membrane protein</topology>
    </subcellularLocation>
</comment>
<comment type="similarity">
    <text evidence="4">Belongs to the SEC62 family.</text>
</comment>
<evidence type="ECO:0000250" key="1"/>
<evidence type="ECO:0000255" key="2"/>
<evidence type="ECO:0000256" key="3">
    <source>
        <dbReference type="SAM" id="MobiDB-lite"/>
    </source>
</evidence>
<evidence type="ECO:0000305" key="4"/>
<name>SEC62_CANAL</name>
<protein>
    <recommendedName>
        <fullName>Translocation protein SEC62</fullName>
    </recommendedName>
</protein>
<sequence length="293" mass="33286">MSAPTPPQTGQFQVATSAQRSPVAVNIVNYLFQNPILKQRTGLLDNTNDIEFFRFKRLQRALLSDDYKQKQQNPKNGLIPVANNEDVQKVFVLLIQNQLLLPLQKLHYAEVKAVKGWKPNKEKPTLKRADKAVMDPDVYYGWLYQKPNPYILLYSFLAIAGVFAVILFPLWPNFMKRGVWYLSMGALGLIALFFATAIVRLIIYIISLVAFPKPFWLFPNLFEDCGVIESFQPVYAWEEPKKKKGKKKKEPKLEVVEEKVGSSSGDVKVTGSELSNGSSTTGKRKVTLEEVEE</sequence>
<gene>
    <name type="primary">SEC62</name>
    <name type="ordered locus">CAALFM_C103340CA</name>
    <name type="ORF">CaO19.10549</name>
    <name type="ORF">CaO19.3031</name>
</gene>
<feature type="chain" id="PRO_0000206621" description="Translocation protein SEC62">
    <location>
        <begin position="1"/>
        <end position="293"/>
    </location>
</feature>
<feature type="topological domain" description="Cytoplasmic" evidence="2">
    <location>
        <begin position="1"/>
        <end position="150"/>
    </location>
</feature>
<feature type="transmembrane region" description="Helical" evidence="2">
    <location>
        <begin position="151"/>
        <end position="171"/>
    </location>
</feature>
<feature type="topological domain" description="Lumenal" evidence="2">
    <location>
        <begin position="172"/>
        <end position="185"/>
    </location>
</feature>
<feature type="transmembrane region" description="Helical" evidence="2">
    <location>
        <begin position="186"/>
        <end position="206"/>
    </location>
</feature>
<feature type="topological domain" description="Cytoplasmic" evidence="2">
    <location>
        <begin position="207"/>
        <end position="293"/>
    </location>
</feature>
<feature type="region of interest" description="Disordered" evidence="3">
    <location>
        <begin position="240"/>
        <end position="293"/>
    </location>
</feature>
<feature type="compositionally biased region" description="Basic and acidic residues" evidence="3">
    <location>
        <begin position="251"/>
        <end position="260"/>
    </location>
</feature>
<feature type="compositionally biased region" description="Polar residues" evidence="3">
    <location>
        <begin position="272"/>
        <end position="281"/>
    </location>
</feature>
<reference key="1">
    <citation type="journal article" date="2004" name="Proc. Natl. Acad. Sci. U.S.A.">
        <title>The diploid genome sequence of Candida albicans.</title>
        <authorList>
            <person name="Jones T."/>
            <person name="Federspiel N.A."/>
            <person name="Chibana H."/>
            <person name="Dungan J."/>
            <person name="Kalman S."/>
            <person name="Magee B.B."/>
            <person name="Newport G."/>
            <person name="Thorstenson Y.R."/>
            <person name="Agabian N."/>
            <person name="Magee P.T."/>
            <person name="Davis R.W."/>
            <person name="Scherer S."/>
        </authorList>
    </citation>
    <scope>NUCLEOTIDE SEQUENCE [LARGE SCALE GENOMIC DNA]</scope>
    <source>
        <strain>SC5314 / ATCC MYA-2876</strain>
    </source>
</reference>
<reference key="2">
    <citation type="journal article" date="2007" name="Genome Biol.">
        <title>Assembly of the Candida albicans genome into sixteen supercontigs aligned on the eight chromosomes.</title>
        <authorList>
            <person name="van het Hoog M."/>
            <person name="Rast T.J."/>
            <person name="Martchenko M."/>
            <person name="Grindle S."/>
            <person name="Dignard D."/>
            <person name="Hogues H."/>
            <person name="Cuomo C."/>
            <person name="Berriman M."/>
            <person name="Scherer S."/>
            <person name="Magee B.B."/>
            <person name="Whiteway M."/>
            <person name="Chibana H."/>
            <person name="Nantel A."/>
            <person name="Magee P.T."/>
        </authorList>
    </citation>
    <scope>GENOME REANNOTATION</scope>
    <source>
        <strain>SC5314 / ATCC MYA-2876</strain>
    </source>
</reference>
<reference key="3">
    <citation type="journal article" date="2013" name="Genome Biol.">
        <title>Assembly of a phased diploid Candida albicans genome facilitates allele-specific measurements and provides a simple model for repeat and indel structure.</title>
        <authorList>
            <person name="Muzzey D."/>
            <person name="Schwartz K."/>
            <person name="Weissman J.S."/>
            <person name="Sherlock G."/>
        </authorList>
    </citation>
    <scope>NUCLEOTIDE SEQUENCE [LARGE SCALE GENOMIC DNA]</scope>
    <scope>GENOME REANNOTATION</scope>
    <source>
        <strain>SC5314 / ATCC MYA-2876</strain>
    </source>
</reference>
<dbReference type="EMBL" id="CP017623">
    <property type="protein sequence ID" value="AOW26015.1"/>
    <property type="molecule type" value="Genomic_DNA"/>
</dbReference>
<dbReference type="RefSeq" id="XP_721529.1">
    <property type="nucleotide sequence ID" value="XM_716436.2"/>
</dbReference>
<dbReference type="SMR" id="Q5AI21"/>
<dbReference type="FunCoup" id="Q5AI21">
    <property type="interactions" value="141"/>
</dbReference>
<dbReference type="STRING" id="237561.Q5AI21"/>
<dbReference type="EnsemblFungi" id="C1_03340C_A-T">
    <property type="protein sequence ID" value="C1_03340C_A-T-p1"/>
    <property type="gene ID" value="C1_03340C_A"/>
</dbReference>
<dbReference type="GeneID" id="3636860"/>
<dbReference type="KEGG" id="cal:CAALFM_C103340CA"/>
<dbReference type="CGD" id="CAL0000199574">
    <property type="gene designation" value="SEC62"/>
</dbReference>
<dbReference type="VEuPathDB" id="FungiDB:C1_03340C_A"/>
<dbReference type="eggNOG" id="KOG2927">
    <property type="taxonomic scope" value="Eukaryota"/>
</dbReference>
<dbReference type="HOGENOM" id="CLU_040936_1_0_1"/>
<dbReference type="InParanoid" id="Q5AI21"/>
<dbReference type="OMA" id="FKPLYGW"/>
<dbReference type="OrthoDB" id="200187at2759"/>
<dbReference type="PRO" id="PR:Q5AI21"/>
<dbReference type="Proteomes" id="UP000000559">
    <property type="component" value="Chromosome 1"/>
</dbReference>
<dbReference type="GO" id="GO:0005783">
    <property type="term" value="C:endoplasmic reticulum"/>
    <property type="evidence" value="ECO:0000318"/>
    <property type="project" value="GO_Central"/>
</dbReference>
<dbReference type="GO" id="GO:0016020">
    <property type="term" value="C:membrane"/>
    <property type="evidence" value="ECO:0000318"/>
    <property type="project" value="GO_Central"/>
</dbReference>
<dbReference type="GO" id="GO:0005886">
    <property type="term" value="C:plasma membrane"/>
    <property type="evidence" value="ECO:0000314"/>
    <property type="project" value="CGD"/>
</dbReference>
<dbReference type="GO" id="GO:0031207">
    <property type="term" value="C:Sec62/Sec63 complex"/>
    <property type="evidence" value="ECO:0007669"/>
    <property type="project" value="EnsemblFungi"/>
</dbReference>
<dbReference type="GO" id="GO:0071256">
    <property type="term" value="C:translocon complex"/>
    <property type="evidence" value="ECO:0007669"/>
    <property type="project" value="EnsemblFungi"/>
</dbReference>
<dbReference type="GO" id="GO:0008320">
    <property type="term" value="F:protein transmembrane transporter activity"/>
    <property type="evidence" value="ECO:0007669"/>
    <property type="project" value="EnsemblFungi"/>
</dbReference>
<dbReference type="GO" id="GO:0031204">
    <property type="term" value="P:post-translational protein targeting to membrane, translocation"/>
    <property type="evidence" value="ECO:0000318"/>
    <property type="project" value="GO_Central"/>
</dbReference>
<dbReference type="InterPro" id="IPR004728">
    <property type="entry name" value="Sec62"/>
</dbReference>
<dbReference type="InterPro" id="IPR011553">
    <property type="entry name" value="Sec62_asco"/>
</dbReference>
<dbReference type="NCBIfam" id="TIGR00869">
    <property type="entry name" value="sec62"/>
    <property type="match status" value="1"/>
</dbReference>
<dbReference type="PANTHER" id="PTHR12443">
    <property type="entry name" value="TRANSLOCATION PROTEIN SEC62"/>
    <property type="match status" value="1"/>
</dbReference>
<dbReference type="PANTHER" id="PTHR12443:SF9">
    <property type="entry name" value="TRANSLOCATION PROTEIN SEC62"/>
    <property type="match status" value="1"/>
</dbReference>
<dbReference type="Pfam" id="PF03839">
    <property type="entry name" value="Sec62"/>
    <property type="match status" value="1"/>
</dbReference>
<keyword id="KW-0256">Endoplasmic reticulum</keyword>
<keyword id="KW-0472">Membrane</keyword>
<keyword id="KW-0653">Protein transport</keyword>
<keyword id="KW-1185">Reference proteome</keyword>
<keyword id="KW-0811">Translocation</keyword>
<keyword id="KW-0812">Transmembrane</keyword>
<keyword id="KW-1133">Transmembrane helix</keyword>
<keyword id="KW-0813">Transport</keyword>
<proteinExistence type="inferred from homology"/>